<feature type="chain" id="PRO_0000266375" description="Guanylate kinase">
    <location>
        <begin position="1"/>
        <end position="208"/>
    </location>
</feature>
<feature type="domain" description="Guanylate kinase-like" evidence="1">
    <location>
        <begin position="3"/>
        <end position="181"/>
    </location>
</feature>
<feature type="binding site" evidence="1">
    <location>
        <begin position="10"/>
        <end position="17"/>
    </location>
    <ligand>
        <name>ATP</name>
        <dbReference type="ChEBI" id="CHEBI:30616"/>
    </ligand>
</feature>
<proteinExistence type="inferred from homology"/>
<dbReference type="EC" id="2.7.4.8" evidence="1"/>
<dbReference type="EMBL" id="CP000082">
    <property type="protein sequence ID" value="AAZ19571.1"/>
    <property type="molecule type" value="Genomic_DNA"/>
</dbReference>
<dbReference type="RefSeq" id="WP_011280984.1">
    <property type="nucleotide sequence ID" value="NC_007204.1"/>
</dbReference>
<dbReference type="SMR" id="Q4FQY7"/>
<dbReference type="STRING" id="259536.Psyc_1723"/>
<dbReference type="KEGG" id="par:Psyc_1723"/>
<dbReference type="eggNOG" id="COG0194">
    <property type="taxonomic scope" value="Bacteria"/>
</dbReference>
<dbReference type="HOGENOM" id="CLU_001715_1_0_6"/>
<dbReference type="OrthoDB" id="9808150at2"/>
<dbReference type="Proteomes" id="UP000000546">
    <property type="component" value="Chromosome"/>
</dbReference>
<dbReference type="GO" id="GO:0005829">
    <property type="term" value="C:cytosol"/>
    <property type="evidence" value="ECO:0007669"/>
    <property type="project" value="TreeGrafter"/>
</dbReference>
<dbReference type="GO" id="GO:0005524">
    <property type="term" value="F:ATP binding"/>
    <property type="evidence" value="ECO:0007669"/>
    <property type="project" value="UniProtKB-UniRule"/>
</dbReference>
<dbReference type="GO" id="GO:0004385">
    <property type="term" value="F:guanylate kinase activity"/>
    <property type="evidence" value="ECO:0007669"/>
    <property type="project" value="UniProtKB-UniRule"/>
</dbReference>
<dbReference type="CDD" id="cd00071">
    <property type="entry name" value="GMPK"/>
    <property type="match status" value="1"/>
</dbReference>
<dbReference type="FunFam" id="3.30.63.10:FF:000002">
    <property type="entry name" value="Guanylate kinase 1"/>
    <property type="match status" value="1"/>
</dbReference>
<dbReference type="Gene3D" id="3.30.63.10">
    <property type="entry name" value="Guanylate Kinase phosphate binding domain"/>
    <property type="match status" value="1"/>
</dbReference>
<dbReference type="Gene3D" id="3.40.50.300">
    <property type="entry name" value="P-loop containing nucleotide triphosphate hydrolases"/>
    <property type="match status" value="1"/>
</dbReference>
<dbReference type="HAMAP" id="MF_00328">
    <property type="entry name" value="Guanylate_kinase"/>
    <property type="match status" value="1"/>
</dbReference>
<dbReference type="InterPro" id="IPR008145">
    <property type="entry name" value="GK/Ca_channel_bsu"/>
</dbReference>
<dbReference type="InterPro" id="IPR008144">
    <property type="entry name" value="Guanylate_kin-like_dom"/>
</dbReference>
<dbReference type="InterPro" id="IPR017665">
    <property type="entry name" value="Guanylate_kinase"/>
</dbReference>
<dbReference type="InterPro" id="IPR020590">
    <property type="entry name" value="Guanylate_kinase_CS"/>
</dbReference>
<dbReference type="InterPro" id="IPR027417">
    <property type="entry name" value="P-loop_NTPase"/>
</dbReference>
<dbReference type="NCBIfam" id="TIGR03263">
    <property type="entry name" value="guanyl_kin"/>
    <property type="match status" value="1"/>
</dbReference>
<dbReference type="PANTHER" id="PTHR23117:SF13">
    <property type="entry name" value="GUANYLATE KINASE"/>
    <property type="match status" value="1"/>
</dbReference>
<dbReference type="PANTHER" id="PTHR23117">
    <property type="entry name" value="GUANYLATE KINASE-RELATED"/>
    <property type="match status" value="1"/>
</dbReference>
<dbReference type="Pfam" id="PF00625">
    <property type="entry name" value="Guanylate_kin"/>
    <property type="match status" value="1"/>
</dbReference>
<dbReference type="SMART" id="SM00072">
    <property type="entry name" value="GuKc"/>
    <property type="match status" value="1"/>
</dbReference>
<dbReference type="SUPFAM" id="SSF52540">
    <property type="entry name" value="P-loop containing nucleoside triphosphate hydrolases"/>
    <property type="match status" value="1"/>
</dbReference>
<dbReference type="PROSITE" id="PS00856">
    <property type="entry name" value="GUANYLATE_KINASE_1"/>
    <property type="match status" value="1"/>
</dbReference>
<dbReference type="PROSITE" id="PS50052">
    <property type="entry name" value="GUANYLATE_KINASE_2"/>
    <property type="match status" value="1"/>
</dbReference>
<keyword id="KW-0067">ATP-binding</keyword>
<keyword id="KW-0963">Cytoplasm</keyword>
<keyword id="KW-0418">Kinase</keyword>
<keyword id="KW-0547">Nucleotide-binding</keyword>
<keyword id="KW-1185">Reference proteome</keyword>
<keyword id="KW-0808">Transferase</keyword>
<protein>
    <recommendedName>
        <fullName evidence="1">Guanylate kinase</fullName>
        <ecNumber evidence="1">2.7.4.8</ecNumber>
    </recommendedName>
    <alternativeName>
        <fullName evidence="1">GMP kinase</fullName>
    </alternativeName>
</protein>
<gene>
    <name evidence="1" type="primary">gmk</name>
    <name type="ordered locus">Psyc_1723</name>
</gene>
<organism>
    <name type="scientific">Psychrobacter arcticus (strain DSM 17307 / VKM B-2377 / 273-4)</name>
    <dbReference type="NCBI Taxonomy" id="259536"/>
    <lineage>
        <taxon>Bacteria</taxon>
        <taxon>Pseudomonadati</taxon>
        <taxon>Pseudomonadota</taxon>
        <taxon>Gammaproteobacteria</taxon>
        <taxon>Moraxellales</taxon>
        <taxon>Moraxellaceae</taxon>
        <taxon>Psychrobacter</taxon>
    </lineage>
</organism>
<comment type="function">
    <text evidence="1">Essential for recycling GMP and indirectly, cGMP.</text>
</comment>
<comment type="catalytic activity">
    <reaction evidence="1">
        <text>GMP + ATP = GDP + ADP</text>
        <dbReference type="Rhea" id="RHEA:20780"/>
        <dbReference type="ChEBI" id="CHEBI:30616"/>
        <dbReference type="ChEBI" id="CHEBI:58115"/>
        <dbReference type="ChEBI" id="CHEBI:58189"/>
        <dbReference type="ChEBI" id="CHEBI:456216"/>
        <dbReference type="EC" id="2.7.4.8"/>
    </reaction>
</comment>
<comment type="subcellular location">
    <subcellularLocation>
        <location evidence="1">Cytoplasm</location>
    </subcellularLocation>
</comment>
<comment type="similarity">
    <text evidence="1">Belongs to the guanylate kinase family.</text>
</comment>
<evidence type="ECO:0000255" key="1">
    <source>
        <dbReference type="HAMAP-Rule" id="MF_00328"/>
    </source>
</evidence>
<name>KGUA_PSYA2</name>
<accession>Q4FQY7</accession>
<sequence>MTGSLFIITAASGTGKTSLVKQLLATTNDLTVSVSHTTRDPRPGEIDGHHYHFTDVDNFVTAISESQFLEHAEVFGNYYGTSEQSVRAQLDAGVDVILEIDWQGALQVKKIFTDAIMIFILPPSIATLRQRLSTRGQDSMEVIEQRLAGAVNEMAQYINFDYVIINDNFEVALTELKAIIVADRQTLKRQQQRYQRTITNLLSNIVDK</sequence>
<reference key="1">
    <citation type="journal article" date="2010" name="Appl. Environ. Microbiol.">
        <title>The genome sequence of Psychrobacter arcticus 273-4, a psychroactive Siberian permafrost bacterium, reveals mechanisms for adaptation to low-temperature growth.</title>
        <authorList>
            <person name="Ayala-del-Rio H.L."/>
            <person name="Chain P.S."/>
            <person name="Grzymski J.J."/>
            <person name="Ponder M.A."/>
            <person name="Ivanova N."/>
            <person name="Bergholz P.W."/>
            <person name="Di Bartolo G."/>
            <person name="Hauser L."/>
            <person name="Land M."/>
            <person name="Bakermans C."/>
            <person name="Rodrigues D."/>
            <person name="Klappenbach J."/>
            <person name="Zarka D."/>
            <person name="Larimer F."/>
            <person name="Richardson P."/>
            <person name="Murray A."/>
            <person name="Thomashow M."/>
            <person name="Tiedje J.M."/>
        </authorList>
    </citation>
    <scope>NUCLEOTIDE SEQUENCE [LARGE SCALE GENOMIC DNA]</scope>
    <source>
        <strain>DSM 17307 / VKM B-2377 / 273-4</strain>
    </source>
</reference>